<dbReference type="EMBL" id="CP000911">
    <property type="protein sequence ID" value="ABY38301.1"/>
    <property type="molecule type" value="Genomic_DNA"/>
</dbReference>
<dbReference type="RefSeq" id="WP_006070944.1">
    <property type="nucleotide sequence ID" value="NC_010169.1"/>
</dbReference>
<dbReference type="SMR" id="B0CH00"/>
<dbReference type="KEGG" id="bmt:BSUIS_A1250"/>
<dbReference type="HOGENOM" id="CLU_040469_3_2_5"/>
<dbReference type="PRO" id="PR:B0CH00"/>
<dbReference type="Proteomes" id="UP000008545">
    <property type="component" value="Chromosome I"/>
</dbReference>
<dbReference type="GO" id="GO:0005829">
    <property type="term" value="C:cytosol"/>
    <property type="evidence" value="ECO:0007669"/>
    <property type="project" value="TreeGrafter"/>
</dbReference>
<dbReference type="GO" id="GO:0005524">
    <property type="term" value="F:ATP binding"/>
    <property type="evidence" value="ECO:0007669"/>
    <property type="project" value="UniProtKB-UniRule"/>
</dbReference>
<dbReference type="GO" id="GO:0016887">
    <property type="term" value="F:ATP hydrolysis activity"/>
    <property type="evidence" value="ECO:0007669"/>
    <property type="project" value="InterPro"/>
</dbReference>
<dbReference type="GO" id="GO:0140664">
    <property type="term" value="F:ATP-dependent DNA damage sensor activity"/>
    <property type="evidence" value="ECO:0007669"/>
    <property type="project" value="InterPro"/>
</dbReference>
<dbReference type="GO" id="GO:0003684">
    <property type="term" value="F:damaged DNA binding"/>
    <property type="evidence" value="ECO:0007669"/>
    <property type="project" value="UniProtKB-UniRule"/>
</dbReference>
<dbReference type="GO" id="GO:0003697">
    <property type="term" value="F:single-stranded DNA binding"/>
    <property type="evidence" value="ECO:0007669"/>
    <property type="project" value="UniProtKB-UniRule"/>
</dbReference>
<dbReference type="GO" id="GO:0006310">
    <property type="term" value="P:DNA recombination"/>
    <property type="evidence" value="ECO:0007669"/>
    <property type="project" value="UniProtKB-UniRule"/>
</dbReference>
<dbReference type="GO" id="GO:0006281">
    <property type="term" value="P:DNA repair"/>
    <property type="evidence" value="ECO:0007669"/>
    <property type="project" value="UniProtKB-UniRule"/>
</dbReference>
<dbReference type="GO" id="GO:0009432">
    <property type="term" value="P:SOS response"/>
    <property type="evidence" value="ECO:0007669"/>
    <property type="project" value="UniProtKB-UniRule"/>
</dbReference>
<dbReference type="CDD" id="cd00983">
    <property type="entry name" value="RecA"/>
    <property type="match status" value="1"/>
</dbReference>
<dbReference type="FunFam" id="3.40.50.300:FF:000087">
    <property type="entry name" value="Recombinase RecA"/>
    <property type="match status" value="1"/>
</dbReference>
<dbReference type="Gene3D" id="3.40.50.300">
    <property type="entry name" value="P-loop containing nucleotide triphosphate hydrolases"/>
    <property type="match status" value="1"/>
</dbReference>
<dbReference type="HAMAP" id="MF_00268">
    <property type="entry name" value="RecA"/>
    <property type="match status" value="1"/>
</dbReference>
<dbReference type="InterPro" id="IPR003593">
    <property type="entry name" value="AAA+_ATPase"/>
</dbReference>
<dbReference type="InterPro" id="IPR013765">
    <property type="entry name" value="DNA_recomb/repair_RecA"/>
</dbReference>
<dbReference type="InterPro" id="IPR020584">
    <property type="entry name" value="DNA_recomb/repair_RecA_CS"/>
</dbReference>
<dbReference type="InterPro" id="IPR027417">
    <property type="entry name" value="P-loop_NTPase"/>
</dbReference>
<dbReference type="InterPro" id="IPR049261">
    <property type="entry name" value="RecA-like_C"/>
</dbReference>
<dbReference type="InterPro" id="IPR049428">
    <property type="entry name" value="RecA-like_N"/>
</dbReference>
<dbReference type="InterPro" id="IPR020588">
    <property type="entry name" value="RecA_ATP-bd"/>
</dbReference>
<dbReference type="InterPro" id="IPR023400">
    <property type="entry name" value="RecA_C_sf"/>
</dbReference>
<dbReference type="InterPro" id="IPR020587">
    <property type="entry name" value="RecA_monomer-monomer_interface"/>
</dbReference>
<dbReference type="NCBIfam" id="TIGR02012">
    <property type="entry name" value="tigrfam_recA"/>
    <property type="match status" value="1"/>
</dbReference>
<dbReference type="PANTHER" id="PTHR45900:SF1">
    <property type="entry name" value="MITOCHONDRIAL DNA REPAIR PROTEIN RECA HOMOLOG-RELATED"/>
    <property type="match status" value="1"/>
</dbReference>
<dbReference type="PANTHER" id="PTHR45900">
    <property type="entry name" value="RECA"/>
    <property type="match status" value="1"/>
</dbReference>
<dbReference type="Pfam" id="PF00154">
    <property type="entry name" value="RecA"/>
    <property type="match status" value="1"/>
</dbReference>
<dbReference type="Pfam" id="PF21096">
    <property type="entry name" value="RecA_C"/>
    <property type="match status" value="1"/>
</dbReference>
<dbReference type="PRINTS" id="PR00142">
    <property type="entry name" value="RECA"/>
</dbReference>
<dbReference type="SMART" id="SM00382">
    <property type="entry name" value="AAA"/>
    <property type="match status" value="1"/>
</dbReference>
<dbReference type="SUPFAM" id="SSF52540">
    <property type="entry name" value="P-loop containing nucleoside triphosphate hydrolases"/>
    <property type="match status" value="1"/>
</dbReference>
<dbReference type="SUPFAM" id="SSF54752">
    <property type="entry name" value="RecA protein, C-terminal domain"/>
    <property type="match status" value="1"/>
</dbReference>
<dbReference type="PROSITE" id="PS00321">
    <property type="entry name" value="RECA_1"/>
    <property type="match status" value="1"/>
</dbReference>
<dbReference type="PROSITE" id="PS50162">
    <property type="entry name" value="RECA_2"/>
    <property type="match status" value="1"/>
</dbReference>
<dbReference type="PROSITE" id="PS50163">
    <property type="entry name" value="RECA_3"/>
    <property type="match status" value="1"/>
</dbReference>
<organism>
    <name type="scientific">Brucella suis (strain ATCC 23445 / NCTC 10510)</name>
    <dbReference type="NCBI Taxonomy" id="470137"/>
    <lineage>
        <taxon>Bacteria</taxon>
        <taxon>Pseudomonadati</taxon>
        <taxon>Pseudomonadota</taxon>
        <taxon>Alphaproteobacteria</taxon>
        <taxon>Hyphomicrobiales</taxon>
        <taxon>Brucellaceae</taxon>
        <taxon>Brucella/Ochrobactrum group</taxon>
        <taxon>Brucella</taxon>
    </lineage>
</organism>
<feature type="chain" id="PRO_1000078664" description="Protein RecA">
    <location>
        <begin position="1"/>
        <end position="361"/>
    </location>
</feature>
<feature type="binding site" evidence="1">
    <location>
        <begin position="77"/>
        <end position="84"/>
    </location>
    <ligand>
        <name>ATP</name>
        <dbReference type="ChEBI" id="CHEBI:30616"/>
    </ligand>
</feature>
<protein>
    <recommendedName>
        <fullName evidence="1">Protein RecA</fullName>
    </recommendedName>
    <alternativeName>
        <fullName evidence="1">Recombinase A</fullName>
    </alternativeName>
</protein>
<comment type="function">
    <text evidence="1">Can catalyze the hydrolysis of ATP in the presence of single-stranded DNA, the ATP-dependent uptake of single-stranded DNA by duplex DNA, and the ATP-dependent hybridization of homologous single-stranded DNAs. It interacts with LexA causing its activation and leading to its autocatalytic cleavage.</text>
</comment>
<comment type="subcellular location">
    <subcellularLocation>
        <location evidence="1">Cytoplasm</location>
    </subcellularLocation>
</comment>
<comment type="similarity">
    <text evidence="1">Belongs to the RecA family.</text>
</comment>
<name>RECA_BRUSI</name>
<proteinExistence type="inferred from homology"/>
<sequence length="361" mass="38767">MSQNSLRLVEDNSVDKTKALDAALSQIERAFGKGSIMRLGQNDQVVEIETVSTGSLSLDIALGVGGLPKGRIVEIYGPESSGKTTLALHTIAEAQKKGGICAFVDAEHALDPVYARKLGVDLENLLISQPDTGEQALEITDTLVRSGAIDVLVVDSVAALTPRAEIEGEMGDSLPGLQARLMSQALRKLTGSISRSNCMVIFINQIRMKIGVMFGSPETTTGGNALKFYASVRLDIRRIGSIKERDEVMGNQTRVKVVKNKLAPPFKQVEFDIMYGAGVSKVGELVDLGVKAGVVEKSGAWFSYNSQRLGQGRENAKQYLKDNPEVAREIETTLRQNAGLIAEQFLDDGGPEEDAAGAAEM</sequence>
<reference key="1">
    <citation type="submission" date="2007-12" db="EMBL/GenBank/DDBJ databases">
        <title>Brucella suis ATCC 23445 whole genome shotgun sequencing project.</title>
        <authorList>
            <person name="Setubal J.C."/>
            <person name="Bowns C."/>
            <person name="Boyle S."/>
            <person name="Crasta O.R."/>
            <person name="Czar M.J."/>
            <person name="Dharmanolla C."/>
            <person name="Gillespie J.J."/>
            <person name="Kenyon R.W."/>
            <person name="Lu J."/>
            <person name="Mane S."/>
            <person name="Mohapatra S."/>
            <person name="Nagrani S."/>
            <person name="Purkayastha A."/>
            <person name="Rajasimha H.K."/>
            <person name="Shallom J.M."/>
            <person name="Shallom S."/>
            <person name="Shukla M."/>
            <person name="Snyder E.E."/>
            <person name="Sobral B.W."/>
            <person name="Wattam A.R."/>
            <person name="Will R."/>
            <person name="Williams K."/>
            <person name="Yoo H."/>
            <person name="Bruce D."/>
            <person name="Detter C."/>
            <person name="Munk C."/>
            <person name="Brettin T.S."/>
        </authorList>
    </citation>
    <scope>NUCLEOTIDE SEQUENCE [LARGE SCALE GENOMIC DNA]</scope>
    <source>
        <strain>ATCC 23445 / NCTC 10510</strain>
    </source>
</reference>
<keyword id="KW-0067">ATP-binding</keyword>
<keyword id="KW-0963">Cytoplasm</keyword>
<keyword id="KW-0227">DNA damage</keyword>
<keyword id="KW-0233">DNA recombination</keyword>
<keyword id="KW-0234">DNA repair</keyword>
<keyword id="KW-0238">DNA-binding</keyword>
<keyword id="KW-0547">Nucleotide-binding</keyword>
<keyword id="KW-0742">SOS response</keyword>
<accession>B0CH00</accession>
<gene>
    <name evidence="1" type="primary">recA</name>
    <name type="ordered locus">BSUIS_A1250</name>
</gene>
<evidence type="ECO:0000255" key="1">
    <source>
        <dbReference type="HAMAP-Rule" id="MF_00268"/>
    </source>
</evidence>